<evidence type="ECO:0000250" key="1">
    <source>
        <dbReference type="UniProtKB" id="L0E2Z4"/>
    </source>
</evidence>
<evidence type="ECO:0000250" key="2">
    <source>
        <dbReference type="UniProtKB" id="O93868"/>
    </source>
</evidence>
<evidence type="ECO:0000269" key="3">
    <source>
    </source>
</evidence>
<evidence type="ECO:0000269" key="4">
    <source>
    </source>
</evidence>
<evidence type="ECO:0000269" key="5">
    <source>
    </source>
</evidence>
<evidence type="ECO:0000269" key="6">
    <source>
    </source>
</evidence>
<evidence type="ECO:0000303" key="7">
    <source>
    </source>
</evidence>
<evidence type="ECO:0000305" key="8"/>
<evidence type="ECO:0000305" key="9">
    <source>
    </source>
</evidence>
<accession>D7PI11</accession>
<protein>
    <recommendedName>
        <fullName evidence="7">Short chain dehydrogenase gsfK</fullName>
        <ecNumber evidence="9">1.-.-.-</ecNumber>
    </recommendedName>
    <alternativeName>
        <fullName evidence="7">Griseofulvin synthesis protein K</fullName>
    </alternativeName>
</protein>
<reference key="1">
    <citation type="journal article" date="2010" name="Chem. Biol.">
        <title>Identification of the viridicatumtoxin and griseofulvin gene clusters from Penicillium aethiopicum.</title>
        <authorList>
            <person name="Chooi Y.H."/>
            <person name="Cacho R."/>
            <person name="Tang Y."/>
        </authorList>
    </citation>
    <scope>NUCLEOTIDE SEQUENCE [GENOMIC DNA]</scope>
    <scope>FUNCTION</scope>
    <source>
        <strain>IBT 5753</strain>
    </source>
</reference>
<reference key="2">
    <citation type="journal article" date="1958" name="Nature">
        <title>Experimental ringworm in guinea pigs: oral treatment with griseofulvin.</title>
        <authorList>
            <person name="Gentles J.C."/>
        </authorList>
    </citation>
    <scope>BIOTECHNOLOGY</scope>
</reference>
<reference key="3">
    <citation type="journal article" date="1973" name="Nature">
        <title>Griseofulvin inhibits fungal mitosis.</title>
        <authorList>
            <person name="Gull K."/>
            <person name="Trinci A.P."/>
        </authorList>
    </citation>
    <scope>BIOTECHNOLOGY</scope>
</reference>
<reference key="4">
    <citation type="journal article" date="2013" name="ACS Chem. Biol.">
        <title>Complexity generation in fungal polyketide biosynthesis: a spirocycle-forming P450 in the concise pathway to the antifungal drug griseofulvin.</title>
        <authorList>
            <person name="Cacho R.A."/>
            <person name="Chooi Y.H."/>
            <person name="Zhou H."/>
            <person name="Tang Y."/>
        </authorList>
    </citation>
    <scope>FUNCTION</scope>
</reference>
<comment type="function">
    <text evidence="4 5">Short chain dehydrogenase; part of the gene cluster that mediates the biosynthesis of griseofulvin, an important antifungal drug that has been in use for a long time for treating dermatophyte infections (PubMed:20534346, PubMed:23978092). The first step of the pathway is the formation of the heptaketide backbone by gsfA which is initiated by priming with acetyl-CoA, followed by sequential condensations of 6 malonyl-CoA units (PubMed:20534346, PubMed:23978092). The resulting benzophenone can undergo a spontaneous dehydration to form norlichexanthone (PubMed:23978092). However, the true precursor for the griseofulvin biosynthesis is not norlichexanthone, but the heptaketide benzophenone that is O-methylated at 3-OH by gsfB to produce griseophenone D which is further methylated at 9-OH by gsfC to yield griseophenone C (PubMed:23978092). Griseophenone C is then substrate of halogenase gsfI which is responsible for the regio-specific chlorination at the C13 position to form griseophenone B (PubMed:23978092). The cytochrome P450 gsfF catalyzes the coupling of orcinol and phloroglucinol rings in griseophenone B to form desmethyl-dehydrogriseofulvin A which is further methylated at 5-OH by gsfD to yield dehydrogriseofulvin (PubMed:23978092). Finally, gsfE performs stereospecific reduction of enone 18 of dehydrogriseofulvin to afford the final product griseofulvin (PubMed:23978092). The exact role of gsfK within the pathway has not been identified yet (PubMed:23978092).</text>
</comment>
<comment type="pathway">
    <text evidence="4 5">Secondary metabolite biosynthesis; terpenoid biosynthesis.</text>
</comment>
<comment type="biotechnology">
    <text evidence="3 6">Griseofulvin is a spirocyclic fungal natural product used in treatment of fungal dermatophytes (PubMed:13577889, PubMed:4583105).</text>
</comment>
<comment type="similarity">
    <text evidence="8">Belongs to the short-chain dehydrogenases/reductases (SDR) family.</text>
</comment>
<dbReference type="EC" id="1.-.-.-" evidence="9"/>
<dbReference type="EMBL" id="GU574478">
    <property type="protein sequence ID" value="ADI24951.1"/>
    <property type="molecule type" value="Genomic_DNA"/>
</dbReference>
<dbReference type="SMR" id="D7PI11"/>
<dbReference type="UniPathway" id="UPA00213"/>
<dbReference type="GO" id="GO:0005737">
    <property type="term" value="C:cytoplasm"/>
    <property type="evidence" value="ECO:0007669"/>
    <property type="project" value="TreeGrafter"/>
</dbReference>
<dbReference type="GO" id="GO:0000166">
    <property type="term" value="F:nucleotide binding"/>
    <property type="evidence" value="ECO:0007669"/>
    <property type="project" value="UniProtKB-KW"/>
</dbReference>
<dbReference type="GO" id="GO:0016491">
    <property type="term" value="F:oxidoreductase activity"/>
    <property type="evidence" value="ECO:0007669"/>
    <property type="project" value="UniProtKB-KW"/>
</dbReference>
<dbReference type="GO" id="GO:0016114">
    <property type="term" value="P:terpenoid biosynthetic process"/>
    <property type="evidence" value="ECO:0007669"/>
    <property type="project" value="UniProtKB-UniPathway"/>
</dbReference>
<dbReference type="CDD" id="cd05325">
    <property type="entry name" value="carb_red_sniffer_like_SDR_c"/>
    <property type="match status" value="1"/>
</dbReference>
<dbReference type="Gene3D" id="3.40.50.720">
    <property type="entry name" value="NAD(P)-binding Rossmann-like Domain"/>
    <property type="match status" value="1"/>
</dbReference>
<dbReference type="InterPro" id="IPR051468">
    <property type="entry name" value="Fungal_SecMetab_SDRs"/>
</dbReference>
<dbReference type="InterPro" id="IPR036291">
    <property type="entry name" value="NAD(P)-bd_dom_sf"/>
</dbReference>
<dbReference type="InterPro" id="IPR002347">
    <property type="entry name" value="SDR_fam"/>
</dbReference>
<dbReference type="PANTHER" id="PTHR43544:SF7">
    <property type="entry name" value="NADB-LER2"/>
    <property type="match status" value="1"/>
</dbReference>
<dbReference type="PANTHER" id="PTHR43544">
    <property type="entry name" value="SHORT-CHAIN DEHYDROGENASE/REDUCTASE"/>
    <property type="match status" value="1"/>
</dbReference>
<dbReference type="Pfam" id="PF00106">
    <property type="entry name" value="adh_short"/>
    <property type="match status" value="1"/>
</dbReference>
<dbReference type="PRINTS" id="PR00081">
    <property type="entry name" value="GDHRDH"/>
</dbReference>
<dbReference type="SUPFAM" id="SSF51735">
    <property type="entry name" value="NAD(P)-binding Rossmann-fold domains"/>
    <property type="match status" value="1"/>
</dbReference>
<gene>
    <name evidence="7" type="primary">gsfK</name>
</gene>
<proteinExistence type="evidence at protein level"/>
<sequence length="251" mass="26235">MPATVLITGGNRGLGKGLVATYLSTPDTTVIATVRDPSKCESLSALPKALGSNLLLVKLEVTSKDSITTAIGTLDTHNIGSIDVVIANAGISGPTSSLAEAPVSELQRYIDVNAYGPFELFKAVLPLLRSSNSGNKAKFVCISSAGGSLAAMYNFMPISAYGASKALANFLVKWLALDNKDIIIWAQNPGSVDTDMARDGLDLAKSLGFDLSSLSFTSPEESACAIKKLIDGATTEMSGKFLDHDGSELAW</sequence>
<name>GSFK_PENAE</name>
<keyword id="KW-0521">NADP</keyword>
<keyword id="KW-0547">Nucleotide-binding</keyword>
<keyword id="KW-0560">Oxidoreductase</keyword>
<organism>
    <name type="scientific">Penicillium aethiopicum</name>
    <dbReference type="NCBI Taxonomy" id="36650"/>
    <lineage>
        <taxon>Eukaryota</taxon>
        <taxon>Fungi</taxon>
        <taxon>Dikarya</taxon>
        <taxon>Ascomycota</taxon>
        <taxon>Pezizomycotina</taxon>
        <taxon>Eurotiomycetes</taxon>
        <taxon>Eurotiomycetidae</taxon>
        <taxon>Eurotiales</taxon>
        <taxon>Aspergillaceae</taxon>
        <taxon>Penicillium</taxon>
    </lineage>
</organism>
<feature type="chain" id="PRO_0000436725" description="Short chain dehydrogenase gsfK">
    <location>
        <begin position="1"/>
        <end position="251"/>
    </location>
</feature>
<feature type="active site" description="Proton donor" evidence="2">
    <location>
        <position position="143"/>
    </location>
</feature>
<feature type="active site" description="Proton donor" evidence="2">
    <location>
        <position position="161"/>
    </location>
</feature>
<feature type="active site" description="Lowers pKa of active site Tyr" evidence="2">
    <location>
        <position position="165"/>
    </location>
</feature>
<feature type="binding site" evidence="1">
    <location>
        <position position="14"/>
    </location>
    <ligand>
        <name>NADP(+)</name>
        <dbReference type="ChEBI" id="CHEBI:58349"/>
    </ligand>
</feature>
<feature type="binding site" evidence="1">
    <location>
        <position position="33"/>
    </location>
    <ligand>
        <name>NADP(+)</name>
        <dbReference type="ChEBI" id="CHEBI:58349"/>
    </ligand>
</feature>
<feature type="binding site" evidence="1">
    <location>
        <position position="60"/>
    </location>
    <ligand>
        <name>NADP(+)</name>
        <dbReference type="ChEBI" id="CHEBI:58349"/>
    </ligand>
</feature>
<feature type="binding site" evidence="2">
    <location>
        <position position="88"/>
    </location>
    <ligand>
        <name>NADP(+)</name>
        <dbReference type="ChEBI" id="CHEBI:58349"/>
    </ligand>
</feature>
<feature type="binding site" evidence="1">
    <location>
        <position position="122"/>
    </location>
    <ligand>
        <name>NADP(+)</name>
        <dbReference type="ChEBI" id="CHEBI:58349"/>
    </ligand>
</feature>
<feature type="binding site" evidence="2">
    <location>
        <position position="161"/>
    </location>
    <ligand>
        <name>NADP(+)</name>
        <dbReference type="ChEBI" id="CHEBI:58349"/>
    </ligand>
</feature>
<feature type="binding site" evidence="2">
    <location>
        <position position="165"/>
    </location>
    <ligand>
        <name>NADP(+)</name>
        <dbReference type="ChEBI" id="CHEBI:58349"/>
    </ligand>
</feature>
<feature type="binding site" evidence="2">
    <location>
        <position position="192"/>
    </location>
    <ligand>
        <name>NADP(+)</name>
        <dbReference type="ChEBI" id="CHEBI:58349"/>
    </ligand>
</feature>
<feature type="binding site" evidence="1">
    <location>
        <position position="194"/>
    </location>
    <ligand>
        <name>NADP(+)</name>
        <dbReference type="ChEBI" id="CHEBI:58349"/>
    </ligand>
</feature>